<name>TM17B_XENTR</name>
<keyword id="KW-1003">Cell membrane</keyword>
<keyword id="KW-0966">Cell projection</keyword>
<keyword id="KW-0969">Cilium</keyword>
<keyword id="KW-0970">Cilium biogenesis/degradation</keyword>
<keyword id="KW-0325">Glycoprotein</keyword>
<keyword id="KW-0472">Membrane</keyword>
<keyword id="KW-1185">Reference proteome</keyword>
<keyword id="KW-0812">Transmembrane</keyword>
<keyword id="KW-1133">Transmembrane helix</keyword>
<sequence length="219" mass="25067">MALLTPLPGSVRHGLARISGSLFIQNKTRDCGEQHAYQSGHDLLSSLPLQMMLYFNAFFFPFWIISEIITMELKFGRLSGYYQILLTTSLVILTLVESLRLYIGYVGNLHEKVPELAGFLILTLLIQLPLLLFLLTDNRNLLLPLDLAVHMIYLMFINAEIVISFLVLKTMTRQFALEYYLQQSEILVSKHVPVNRTLLRFQNTTTSIAEQYGSDALMY</sequence>
<feature type="chain" id="PRO_0000415839" description="Transmembrane protein 17B">
    <location>
        <begin position="1"/>
        <end position="219"/>
    </location>
</feature>
<feature type="transmembrane region" description="Helical" evidence="2">
    <location>
        <begin position="51"/>
        <end position="71"/>
    </location>
</feature>
<feature type="transmembrane region" description="Helical" evidence="2">
    <location>
        <begin position="84"/>
        <end position="104"/>
    </location>
</feature>
<feature type="transmembrane region" description="Helical" evidence="2">
    <location>
        <begin position="116"/>
        <end position="136"/>
    </location>
</feature>
<feature type="transmembrane region" description="Helical" evidence="2">
    <location>
        <begin position="147"/>
        <end position="167"/>
    </location>
</feature>
<feature type="glycosylation site" description="N-linked (GlcNAc...) asparagine" evidence="2">
    <location>
        <position position="26"/>
    </location>
</feature>
<feature type="glycosylation site" description="N-linked (GlcNAc...) asparagine" evidence="2">
    <location>
        <position position="195"/>
    </location>
</feature>
<feature type="glycosylation site" description="N-linked (GlcNAc...) asparagine" evidence="2">
    <location>
        <position position="203"/>
    </location>
</feature>
<organism>
    <name type="scientific">Xenopus tropicalis</name>
    <name type="common">Western clawed frog</name>
    <name type="synonym">Silurana tropicalis</name>
    <dbReference type="NCBI Taxonomy" id="8364"/>
    <lineage>
        <taxon>Eukaryota</taxon>
        <taxon>Metazoa</taxon>
        <taxon>Chordata</taxon>
        <taxon>Craniata</taxon>
        <taxon>Vertebrata</taxon>
        <taxon>Euteleostomi</taxon>
        <taxon>Amphibia</taxon>
        <taxon>Batrachia</taxon>
        <taxon>Anura</taxon>
        <taxon>Pipoidea</taxon>
        <taxon>Pipidae</taxon>
        <taxon>Xenopodinae</taxon>
        <taxon>Xenopus</taxon>
        <taxon>Silurana</taxon>
    </lineage>
</organism>
<protein>
    <recommendedName>
        <fullName>Transmembrane protein 17B</fullName>
    </recommendedName>
</protein>
<dbReference type="EMBL" id="AAMC01003686">
    <property type="status" value="NOT_ANNOTATED_CDS"/>
    <property type="molecule type" value="Genomic_DNA"/>
</dbReference>
<dbReference type="EMBL" id="BC135817">
    <property type="protein sequence ID" value="AAI35818.1"/>
    <property type="status" value="ALT_INIT"/>
    <property type="molecule type" value="mRNA"/>
</dbReference>
<dbReference type="STRING" id="8364.ENSXETP00000014680"/>
<dbReference type="GlyCosmos" id="F6RWY9">
    <property type="glycosylation" value="3 sites, No reported glycans"/>
</dbReference>
<dbReference type="PaxDb" id="8364-ENSXETP00000062848"/>
<dbReference type="GeneID" id="100124937"/>
<dbReference type="KEGG" id="xtr:100124937"/>
<dbReference type="AGR" id="Xenbase:XB-GENE-5865173"/>
<dbReference type="CTD" id="200728"/>
<dbReference type="Xenbase" id="XB-GENE-5865173">
    <property type="gene designation" value="tmem17"/>
</dbReference>
<dbReference type="eggNOG" id="KOG4694">
    <property type="taxonomic scope" value="Eukaryota"/>
</dbReference>
<dbReference type="HOGENOM" id="CLU_092836_0_0_1"/>
<dbReference type="InParanoid" id="F6RWY9"/>
<dbReference type="OMA" id="FINNKTW"/>
<dbReference type="OrthoDB" id="311720at2759"/>
<dbReference type="Proteomes" id="UP000008143">
    <property type="component" value="Chromosome 1"/>
</dbReference>
<dbReference type="Bgee" id="ENSXETG00000032054">
    <property type="expression patterns" value="Expressed in embryo"/>
</dbReference>
<dbReference type="GO" id="GO:0060170">
    <property type="term" value="C:ciliary membrane"/>
    <property type="evidence" value="ECO:0000250"/>
    <property type="project" value="UniProtKB"/>
</dbReference>
<dbReference type="GO" id="GO:0035869">
    <property type="term" value="C:ciliary transition zone"/>
    <property type="evidence" value="ECO:0000250"/>
    <property type="project" value="UniProtKB"/>
</dbReference>
<dbReference type="GO" id="GO:0036038">
    <property type="term" value="C:MKS complex"/>
    <property type="evidence" value="ECO:0000250"/>
    <property type="project" value="UniProtKB"/>
</dbReference>
<dbReference type="GO" id="GO:0060271">
    <property type="term" value="P:cilium assembly"/>
    <property type="evidence" value="ECO:0000250"/>
    <property type="project" value="UniProtKB"/>
</dbReference>
<dbReference type="GO" id="GO:0007224">
    <property type="term" value="P:smoothened signaling pathway"/>
    <property type="evidence" value="ECO:0000250"/>
    <property type="project" value="UniProtKB"/>
</dbReference>
<dbReference type="InterPro" id="IPR019184">
    <property type="entry name" value="Uncharacterised_TM-17"/>
</dbReference>
<dbReference type="PANTHER" id="PTHR13531">
    <property type="entry name" value="GEO07735P1-RELATED-RELATED"/>
    <property type="match status" value="1"/>
</dbReference>
<dbReference type="PANTHER" id="PTHR13531:SF4">
    <property type="entry name" value="TRANSMEMBRANE PROTEIN 17B"/>
    <property type="match status" value="1"/>
</dbReference>
<dbReference type="Pfam" id="PF09799">
    <property type="entry name" value="Transmemb_17"/>
    <property type="match status" value="1"/>
</dbReference>
<reference key="1">
    <citation type="journal article" date="2010" name="Science">
        <title>The genome of the Western clawed frog Xenopus tropicalis.</title>
        <authorList>
            <person name="Hellsten U."/>
            <person name="Harland R.M."/>
            <person name="Gilchrist M.J."/>
            <person name="Hendrix D."/>
            <person name="Jurka J."/>
            <person name="Kapitonov V."/>
            <person name="Ovcharenko I."/>
            <person name="Putnam N.H."/>
            <person name="Shu S."/>
            <person name="Taher L."/>
            <person name="Blitz I.L."/>
            <person name="Blumberg B."/>
            <person name="Dichmann D.S."/>
            <person name="Dubchak I."/>
            <person name="Amaya E."/>
            <person name="Detter J.C."/>
            <person name="Fletcher R."/>
            <person name="Gerhard D.S."/>
            <person name="Goodstein D."/>
            <person name="Graves T."/>
            <person name="Grigoriev I.V."/>
            <person name="Grimwood J."/>
            <person name="Kawashima T."/>
            <person name="Lindquist E."/>
            <person name="Lucas S.M."/>
            <person name="Mead P.E."/>
            <person name="Mitros T."/>
            <person name="Ogino H."/>
            <person name="Ohta Y."/>
            <person name="Poliakov A.V."/>
            <person name="Pollet N."/>
            <person name="Robert J."/>
            <person name="Salamov A."/>
            <person name="Sater A.K."/>
            <person name="Schmutz J."/>
            <person name="Terry A."/>
            <person name="Vize P.D."/>
            <person name="Warren W.C."/>
            <person name="Wells D."/>
            <person name="Wills A."/>
            <person name="Wilson R.K."/>
            <person name="Zimmerman L.B."/>
            <person name="Zorn A.M."/>
            <person name="Grainger R."/>
            <person name="Grammer T."/>
            <person name="Khokha M.K."/>
            <person name="Richardson P.M."/>
            <person name="Rokhsar D.S."/>
        </authorList>
    </citation>
    <scope>NUCLEOTIDE SEQUENCE [LARGE SCALE GENOMIC DNA]</scope>
</reference>
<reference key="2">
    <citation type="submission" date="2007-03" db="EMBL/GenBank/DDBJ databases">
        <authorList>
            <consortium name="NIH - Xenopus Gene Collection (XGC) project"/>
        </authorList>
    </citation>
    <scope>NUCLEOTIDE SEQUENCE [LARGE SCALE MRNA] OF 3-219</scope>
    <source>
        <tissue>Embryo</tissue>
    </source>
</reference>
<gene>
    <name type="primary">Tmem17-b</name>
</gene>
<evidence type="ECO:0000250" key="1"/>
<evidence type="ECO:0000255" key="2"/>
<evidence type="ECO:0000305" key="3"/>
<accession>F6RWY9</accession>
<accession>A4II27</accession>
<proteinExistence type="evidence at transcript level"/>
<comment type="function">
    <text evidence="1">Transmembrane component of the tectonic-like complex, a complex localized at the transition zone of primary cilia and acting as a barrier that prevents diffusion of transmembrane proteins between the cilia and plasma membranes. Required for ciliogenesis and sonic hedgehog/SHH signaling (By similarity).</text>
</comment>
<comment type="subunit">
    <text evidence="1">Part of the tectonic-like complex (also named B9 complex).</text>
</comment>
<comment type="subcellular location">
    <subcellularLocation>
        <location evidence="1">Cell projection</location>
        <location evidence="1">Cilium membrane</location>
        <topology evidence="1">Multi-pass membrane protein</topology>
    </subcellularLocation>
    <text evidence="1">Localizes to the transition zone of primary cilia.</text>
</comment>
<comment type="similarity">
    <text evidence="3">Belongs to the TMEM17 family.</text>
</comment>
<comment type="sequence caution" evidence="3">
    <conflict type="erroneous initiation">
        <sequence resource="EMBL-CDS" id="AAI35818"/>
    </conflict>
    <text>Extended N-terminus.</text>
</comment>